<feature type="chain" id="PRO_1000138043" description="N-succinylglutamate 5-semialdehyde dehydrogenase">
    <location>
        <begin position="1"/>
        <end position="492"/>
    </location>
</feature>
<feature type="active site" evidence="1">
    <location>
        <position position="243"/>
    </location>
</feature>
<feature type="active site" evidence="1">
    <location>
        <position position="277"/>
    </location>
</feature>
<feature type="binding site" evidence="1">
    <location>
        <begin position="220"/>
        <end position="225"/>
    </location>
    <ligand>
        <name>NAD(+)</name>
        <dbReference type="ChEBI" id="CHEBI:57540"/>
    </ligand>
</feature>
<name>ASTD_ECO7I</name>
<proteinExistence type="inferred from homology"/>
<protein>
    <recommendedName>
        <fullName evidence="1">N-succinylglutamate 5-semialdehyde dehydrogenase</fullName>
        <ecNumber evidence="1">1.2.1.71</ecNumber>
    </recommendedName>
    <alternativeName>
        <fullName evidence="1">Succinylglutamic semialdehyde dehydrogenase</fullName>
        <shortName evidence="1">SGSD</shortName>
    </alternativeName>
</protein>
<keyword id="KW-0056">Arginine metabolism</keyword>
<keyword id="KW-0520">NAD</keyword>
<keyword id="KW-0560">Oxidoreductase</keyword>
<dbReference type="EC" id="1.2.1.71" evidence="1"/>
<dbReference type="EMBL" id="CU928164">
    <property type="protein sequence ID" value="CAR17442.1"/>
    <property type="molecule type" value="Genomic_DNA"/>
</dbReference>
<dbReference type="RefSeq" id="WP_000177327.1">
    <property type="nucleotide sequence ID" value="NC_011750.1"/>
</dbReference>
<dbReference type="RefSeq" id="YP_002407316.1">
    <property type="nucleotide sequence ID" value="NC_011750.1"/>
</dbReference>
<dbReference type="SMR" id="B7NT31"/>
<dbReference type="STRING" id="585057.ECIAI39_1308"/>
<dbReference type="KEGG" id="ect:ECIAI39_1308"/>
<dbReference type="PATRIC" id="fig|585057.6.peg.1370"/>
<dbReference type="HOGENOM" id="CLU_005391_1_0_6"/>
<dbReference type="UniPathway" id="UPA00185">
    <property type="reaction ID" value="UER00282"/>
</dbReference>
<dbReference type="Proteomes" id="UP000000749">
    <property type="component" value="Chromosome"/>
</dbReference>
<dbReference type="GO" id="GO:0004030">
    <property type="term" value="F:aldehyde dehydrogenase [NAD(P)+] activity"/>
    <property type="evidence" value="ECO:0007669"/>
    <property type="project" value="UniProtKB-ARBA"/>
</dbReference>
<dbReference type="GO" id="GO:0043824">
    <property type="term" value="F:succinylglutamate-semialdehyde dehydrogenase activity"/>
    <property type="evidence" value="ECO:0007669"/>
    <property type="project" value="UniProtKB-EC"/>
</dbReference>
<dbReference type="GO" id="GO:0019544">
    <property type="term" value="P:arginine catabolic process to glutamate"/>
    <property type="evidence" value="ECO:0007669"/>
    <property type="project" value="UniProtKB-UniRule"/>
</dbReference>
<dbReference type="GO" id="GO:0019545">
    <property type="term" value="P:arginine catabolic process to succinate"/>
    <property type="evidence" value="ECO:0007669"/>
    <property type="project" value="UniProtKB-UniRule"/>
</dbReference>
<dbReference type="CDD" id="cd07095">
    <property type="entry name" value="ALDH_SGSD_AstD"/>
    <property type="match status" value="1"/>
</dbReference>
<dbReference type="FunFam" id="3.40.309.10:FF:000013">
    <property type="entry name" value="N-succinylglutamate 5-semialdehyde dehydrogenase"/>
    <property type="match status" value="1"/>
</dbReference>
<dbReference type="FunFam" id="3.40.605.10:FF:000010">
    <property type="entry name" value="N-succinylglutamate 5-semialdehyde dehydrogenase"/>
    <property type="match status" value="1"/>
</dbReference>
<dbReference type="Gene3D" id="3.40.605.10">
    <property type="entry name" value="Aldehyde Dehydrogenase, Chain A, domain 1"/>
    <property type="match status" value="1"/>
</dbReference>
<dbReference type="Gene3D" id="3.40.309.10">
    <property type="entry name" value="Aldehyde Dehydrogenase, Chain A, domain 2"/>
    <property type="match status" value="1"/>
</dbReference>
<dbReference type="HAMAP" id="MF_01174">
    <property type="entry name" value="Aldedh_AstD"/>
    <property type="match status" value="1"/>
</dbReference>
<dbReference type="InterPro" id="IPR016161">
    <property type="entry name" value="Ald_DH/histidinol_DH"/>
</dbReference>
<dbReference type="InterPro" id="IPR016163">
    <property type="entry name" value="Ald_DH_C"/>
</dbReference>
<dbReference type="InterPro" id="IPR016160">
    <property type="entry name" value="Ald_DH_CS_CYS"/>
</dbReference>
<dbReference type="InterPro" id="IPR029510">
    <property type="entry name" value="Ald_DH_CS_GLU"/>
</dbReference>
<dbReference type="InterPro" id="IPR016162">
    <property type="entry name" value="Ald_DH_N"/>
</dbReference>
<dbReference type="InterPro" id="IPR015590">
    <property type="entry name" value="Aldehyde_DH_dom"/>
</dbReference>
<dbReference type="InterPro" id="IPR017649">
    <property type="entry name" value="SuccinylGlu_semiald_DH_AstD"/>
</dbReference>
<dbReference type="NCBIfam" id="TIGR03240">
    <property type="entry name" value="arg_catab_astD"/>
    <property type="match status" value="1"/>
</dbReference>
<dbReference type="NCBIfam" id="NF006992">
    <property type="entry name" value="PRK09457.1"/>
    <property type="match status" value="1"/>
</dbReference>
<dbReference type="PANTHER" id="PTHR11699">
    <property type="entry name" value="ALDEHYDE DEHYDROGENASE-RELATED"/>
    <property type="match status" value="1"/>
</dbReference>
<dbReference type="Pfam" id="PF00171">
    <property type="entry name" value="Aldedh"/>
    <property type="match status" value="1"/>
</dbReference>
<dbReference type="SUPFAM" id="SSF53720">
    <property type="entry name" value="ALDH-like"/>
    <property type="match status" value="1"/>
</dbReference>
<dbReference type="PROSITE" id="PS00070">
    <property type="entry name" value="ALDEHYDE_DEHYDR_CYS"/>
    <property type="match status" value="1"/>
</dbReference>
<dbReference type="PROSITE" id="PS00687">
    <property type="entry name" value="ALDEHYDE_DEHYDR_GLU"/>
    <property type="match status" value="1"/>
</dbReference>
<organism>
    <name type="scientific">Escherichia coli O7:K1 (strain IAI39 / ExPEC)</name>
    <dbReference type="NCBI Taxonomy" id="585057"/>
    <lineage>
        <taxon>Bacteria</taxon>
        <taxon>Pseudomonadati</taxon>
        <taxon>Pseudomonadota</taxon>
        <taxon>Gammaproteobacteria</taxon>
        <taxon>Enterobacterales</taxon>
        <taxon>Enterobacteriaceae</taxon>
        <taxon>Escherichia</taxon>
    </lineage>
</organism>
<comment type="function">
    <text evidence="1">Catalyzes the NAD-dependent reduction of succinylglutamate semialdehyde into succinylglutamate.</text>
</comment>
<comment type="catalytic activity">
    <reaction evidence="1">
        <text>N-succinyl-L-glutamate 5-semialdehyde + NAD(+) + H2O = N-succinyl-L-glutamate + NADH + 2 H(+)</text>
        <dbReference type="Rhea" id="RHEA:10812"/>
        <dbReference type="ChEBI" id="CHEBI:15377"/>
        <dbReference type="ChEBI" id="CHEBI:15378"/>
        <dbReference type="ChEBI" id="CHEBI:57540"/>
        <dbReference type="ChEBI" id="CHEBI:57945"/>
        <dbReference type="ChEBI" id="CHEBI:58520"/>
        <dbReference type="ChEBI" id="CHEBI:58763"/>
        <dbReference type="EC" id="1.2.1.71"/>
    </reaction>
</comment>
<comment type="pathway">
    <text evidence="1">Amino-acid degradation; L-arginine degradation via AST pathway; L-glutamate and succinate from L-arginine: step 4/5.</text>
</comment>
<comment type="similarity">
    <text evidence="1">Belongs to the aldehyde dehydrogenase family. AstD subfamily.</text>
</comment>
<reference key="1">
    <citation type="journal article" date="2009" name="PLoS Genet.">
        <title>Organised genome dynamics in the Escherichia coli species results in highly diverse adaptive paths.</title>
        <authorList>
            <person name="Touchon M."/>
            <person name="Hoede C."/>
            <person name="Tenaillon O."/>
            <person name="Barbe V."/>
            <person name="Baeriswyl S."/>
            <person name="Bidet P."/>
            <person name="Bingen E."/>
            <person name="Bonacorsi S."/>
            <person name="Bouchier C."/>
            <person name="Bouvet O."/>
            <person name="Calteau A."/>
            <person name="Chiapello H."/>
            <person name="Clermont O."/>
            <person name="Cruveiller S."/>
            <person name="Danchin A."/>
            <person name="Diard M."/>
            <person name="Dossat C."/>
            <person name="Karoui M.E."/>
            <person name="Frapy E."/>
            <person name="Garry L."/>
            <person name="Ghigo J.M."/>
            <person name="Gilles A.M."/>
            <person name="Johnson J."/>
            <person name="Le Bouguenec C."/>
            <person name="Lescat M."/>
            <person name="Mangenot S."/>
            <person name="Martinez-Jehanne V."/>
            <person name="Matic I."/>
            <person name="Nassif X."/>
            <person name="Oztas S."/>
            <person name="Petit M.A."/>
            <person name="Pichon C."/>
            <person name="Rouy Z."/>
            <person name="Ruf C.S."/>
            <person name="Schneider D."/>
            <person name="Tourret J."/>
            <person name="Vacherie B."/>
            <person name="Vallenet D."/>
            <person name="Medigue C."/>
            <person name="Rocha E.P.C."/>
            <person name="Denamur E."/>
        </authorList>
    </citation>
    <scope>NUCLEOTIDE SEQUENCE [LARGE SCALE GENOMIC DNA]</scope>
    <source>
        <strain>IAI39 / ExPEC</strain>
    </source>
</reference>
<accession>B7NT31</accession>
<evidence type="ECO:0000255" key="1">
    <source>
        <dbReference type="HAMAP-Rule" id="MF_01174"/>
    </source>
</evidence>
<sequence>MTLWINGDWVTGQGALRVKRNPVSGEVLWQGNDADAAQVGQACRAARAAFPRWARLSFGDRQVRVERFAGLLESNKAELTAIIARETGKPRWEAATEVTAMINKIAISIKAYHVRTGEQRSEMPDGAASLRHRPHGVLAVFGPYNFPGHLPNGHIVPALLAGNTIIFKPSELTPWSGEAVMRLWQQAGLPPGVLNLVQGGRETGQALSALEDLDGLLFTGSANTGYQLHRQLSGQPEKILALEMGGNNPLIIDEAADIDAAVHLTIQSAFVTAGQRCTCARRLLLKSGAQGDAFLARLVAVSQRLTPGRWDDEPQPFIGGLISEQAAQQVVTAWQQLETMGGRTLLAPRLLQAGTSLLTPGIIEMTGVTGVPDEEVFGPLLRVWRYDNFDEAIRMANNTRFGLSCGLVSPEREKFDQLLLEARAGIVNWNKPLTGAASTAPFGGIGASGNHRPSGWYAADYCAWPMASLESDSLTLPATLNPGLDFSDEVVR</sequence>
<gene>
    <name evidence="1" type="primary">astD</name>
    <name type="ordered locus">ECIAI39_1308</name>
</gene>